<name>Y4NH_SINFN</name>
<reference key="1">
    <citation type="journal article" date="1997" name="Nature">
        <title>Molecular basis of symbiosis between Rhizobium and legumes.</title>
        <authorList>
            <person name="Freiberg C.A."/>
            <person name="Fellay R."/>
            <person name="Bairoch A."/>
            <person name="Broughton W.J."/>
            <person name="Rosenthal A."/>
            <person name="Perret X."/>
        </authorList>
    </citation>
    <scope>NUCLEOTIDE SEQUENCE [LARGE SCALE GENOMIC DNA]</scope>
    <source>
        <strain>NBRC 101917 / NGR234</strain>
    </source>
</reference>
<reference key="2">
    <citation type="journal article" date="2009" name="Appl. Environ. Microbiol.">
        <title>Rhizobium sp. strain NGR234 possesses a remarkable number of secretion systems.</title>
        <authorList>
            <person name="Schmeisser C."/>
            <person name="Liesegang H."/>
            <person name="Krysciak D."/>
            <person name="Bakkou N."/>
            <person name="Le Quere A."/>
            <person name="Wollherr A."/>
            <person name="Heinemeyer I."/>
            <person name="Morgenstern B."/>
            <person name="Pommerening-Roeser A."/>
            <person name="Flores M."/>
            <person name="Palacios R."/>
            <person name="Brenner S."/>
            <person name="Gottschalk G."/>
            <person name="Schmitz R.A."/>
            <person name="Broughton W.J."/>
            <person name="Perret X."/>
            <person name="Strittmatter A.W."/>
            <person name="Streit W.R."/>
        </authorList>
    </citation>
    <scope>NUCLEOTIDE SEQUENCE [LARGE SCALE GENOMIC DNA]</scope>
    <source>
        <strain>NBRC 101917 / NGR234</strain>
    </source>
</reference>
<feature type="chain" id="PRO_0000200917" description="Uncharacterized protein y4nH">
    <location>
        <begin position="1"/>
        <end position="117"/>
    </location>
</feature>
<feature type="transmembrane region" description="Helical" evidence="1">
    <location>
        <begin position="3"/>
        <end position="23"/>
    </location>
</feature>
<feature type="transmembrane region" description="Helical" evidence="1">
    <location>
        <begin position="40"/>
        <end position="60"/>
    </location>
</feature>
<feature type="transmembrane region" description="Helical" evidence="1">
    <location>
        <begin position="66"/>
        <end position="86"/>
    </location>
</feature>
<feature type="transmembrane region" description="Helical" evidence="1">
    <location>
        <begin position="94"/>
        <end position="114"/>
    </location>
</feature>
<sequence length="117" mass="12275">MNAVPIILVFAAGLNSCIGNILLKWGRASLPPSAGLADTFLTPGFVGGVVFYGINVLLFAKALDSLEVSVAYPILAGSGFAMLIIASHYFFGEPFHLHKWIGVALVLVGIIFLARGG</sequence>
<gene>
    <name type="ordered locus">NGR_a02340</name>
    <name type="ORF">y4nH</name>
</gene>
<geneLocation type="plasmid">
    <name>sym pNGR234a</name>
</geneLocation>
<protein>
    <recommendedName>
        <fullName>Uncharacterized protein y4nH</fullName>
    </recommendedName>
</protein>
<accession>P55580</accession>
<comment type="subcellular location">
    <subcellularLocation>
        <location evidence="2">Cell membrane</location>
        <topology evidence="2">Multi-pass membrane protein</topology>
    </subcellularLocation>
</comment>
<comment type="similarity">
    <text evidence="2">To E.coli and S.aureus ethidium bromide resistance proteins (ebr/QacC/EmrE/MvrC).</text>
</comment>
<evidence type="ECO:0000255" key="1"/>
<evidence type="ECO:0000305" key="2"/>
<keyword id="KW-1003">Cell membrane</keyword>
<keyword id="KW-0472">Membrane</keyword>
<keyword id="KW-0614">Plasmid</keyword>
<keyword id="KW-1185">Reference proteome</keyword>
<keyword id="KW-0812">Transmembrane</keyword>
<keyword id="KW-1133">Transmembrane helix</keyword>
<organism>
    <name type="scientific">Sinorhizobium fredii (strain NBRC 101917 / NGR234)</name>
    <dbReference type="NCBI Taxonomy" id="394"/>
    <lineage>
        <taxon>Bacteria</taxon>
        <taxon>Pseudomonadati</taxon>
        <taxon>Pseudomonadota</taxon>
        <taxon>Alphaproteobacteria</taxon>
        <taxon>Hyphomicrobiales</taxon>
        <taxon>Rhizobiaceae</taxon>
        <taxon>Sinorhizobium/Ensifer group</taxon>
        <taxon>Sinorhizobium</taxon>
    </lineage>
</organism>
<proteinExistence type="predicted"/>
<dbReference type="EMBL" id="U00090">
    <property type="protein sequence ID" value="AAB91787.1"/>
    <property type="molecule type" value="Genomic_DNA"/>
</dbReference>
<dbReference type="RefSeq" id="NP_443991.1">
    <property type="nucleotide sequence ID" value="NC_000914.2"/>
</dbReference>
<dbReference type="RefSeq" id="WP_010875261.1">
    <property type="nucleotide sequence ID" value="NC_000914.2"/>
</dbReference>
<dbReference type="SMR" id="P55580"/>
<dbReference type="KEGG" id="rhi:NGR_a02340"/>
<dbReference type="eggNOG" id="COG2076">
    <property type="taxonomic scope" value="Bacteria"/>
</dbReference>
<dbReference type="HOGENOM" id="CLU_131462_5_0_5"/>
<dbReference type="OrthoDB" id="426643at2"/>
<dbReference type="Proteomes" id="UP000001054">
    <property type="component" value="Plasmid pNGR234a"/>
</dbReference>
<dbReference type="GO" id="GO:0005886">
    <property type="term" value="C:plasma membrane"/>
    <property type="evidence" value="ECO:0007669"/>
    <property type="project" value="UniProtKB-SubCell"/>
</dbReference>
<dbReference type="GO" id="GO:0022857">
    <property type="term" value="F:transmembrane transporter activity"/>
    <property type="evidence" value="ECO:0007669"/>
    <property type="project" value="InterPro"/>
</dbReference>
<dbReference type="Gene3D" id="1.10.3730.20">
    <property type="match status" value="1"/>
</dbReference>
<dbReference type="InterPro" id="IPR000390">
    <property type="entry name" value="Small_drug/metabolite_transptr"/>
</dbReference>
<dbReference type="InterPro" id="IPR045324">
    <property type="entry name" value="Small_multidrug_res"/>
</dbReference>
<dbReference type="PANTHER" id="PTHR30561:SF9">
    <property type="entry name" value="4-AMINO-4-DEOXY-L-ARABINOSE-PHOSPHOUNDECAPRENOL FLIPPASE SUBUNIT ARNF-RELATED"/>
    <property type="match status" value="1"/>
</dbReference>
<dbReference type="PANTHER" id="PTHR30561">
    <property type="entry name" value="SMR FAMILY PROTON-DEPENDENT DRUG EFFLUX TRANSPORTER SUGE"/>
    <property type="match status" value="1"/>
</dbReference>
<dbReference type="Pfam" id="PF00893">
    <property type="entry name" value="Multi_Drug_Res"/>
    <property type="match status" value="1"/>
</dbReference>
<dbReference type="SUPFAM" id="SSF103481">
    <property type="entry name" value="Multidrug resistance efflux transporter EmrE"/>
    <property type="match status" value="1"/>
</dbReference>